<gene>
    <name evidence="1" type="primary">atpA</name>
    <name type="ordered locus">GWCH70_3305</name>
</gene>
<keyword id="KW-0066">ATP synthesis</keyword>
<keyword id="KW-0067">ATP-binding</keyword>
<keyword id="KW-1003">Cell membrane</keyword>
<keyword id="KW-0139">CF(1)</keyword>
<keyword id="KW-0375">Hydrogen ion transport</keyword>
<keyword id="KW-0406">Ion transport</keyword>
<keyword id="KW-0472">Membrane</keyword>
<keyword id="KW-0547">Nucleotide-binding</keyword>
<keyword id="KW-1278">Translocase</keyword>
<keyword id="KW-0813">Transport</keyword>
<organism>
    <name type="scientific">Geobacillus sp. (strain WCH70)</name>
    <dbReference type="NCBI Taxonomy" id="471223"/>
    <lineage>
        <taxon>Bacteria</taxon>
        <taxon>Bacillati</taxon>
        <taxon>Bacillota</taxon>
        <taxon>Bacilli</taxon>
        <taxon>Bacillales</taxon>
        <taxon>Anoxybacillaceae</taxon>
        <taxon>Geobacillus</taxon>
    </lineage>
</organism>
<feature type="chain" id="PRO_1000214811" description="ATP synthase subunit alpha">
    <location>
        <begin position="1"/>
        <end position="502"/>
    </location>
</feature>
<feature type="region of interest" description="Disordered" evidence="2">
    <location>
        <begin position="115"/>
        <end position="138"/>
    </location>
</feature>
<feature type="binding site" evidence="1">
    <location>
        <begin position="169"/>
        <end position="176"/>
    </location>
    <ligand>
        <name>ATP</name>
        <dbReference type="ChEBI" id="CHEBI:30616"/>
    </ligand>
</feature>
<feature type="site" description="Required for activity" evidence="1">
    <location>
        <position position="362"/>
    </location>
</feature>
<evidence type="ECO:0000255" key="1">
    <source>
        <dbReference type="HAMAP-Rule" id="MF_01346"/>
    </source>
</evidence>
<evidence type="ECO:0000256" key="2">
    <source>
        <dbReference type="SAM" id="MobiDB-lite"/>
    </source>
</evidence>
<accession>C5D992</accession>
<name>ATPA_GEOSW</name>
<proteinExistence type="inferred from homology"/>
<protein>
    <recommendedName>
        <fullName evidence="1">ATP synthase subunit alpha</fullName>
        <ecNumber evidence="1">7.1.2.2</ecNumber>
    </recommendedName>
    <alternativeName>
        <fullName evidence="1">ATP synthase F1 sector subunit alpha</fullName>
    </alternativeName>
    <alternativeName>
        <fullName evidence="1">F-ATPase subunit alpha</fullName>
    </alternativeName>
</protein>
<reference key="1">
    <citation type="submission" date="2009-06" db="EMBL/GenBank/DDBJ databases">
        <title>Complete sequence of chromosome of Geopacillus sp. WCH70.</title>
        <authorList>
            <consortium name="US DOE Joint Genome Institute"/>
            <person name="Lucas S."/>
            <person name="Copeland A."/>
            <person name="Lapidus A."/>
            <person name="Glavina del Rio T."/>
            <person name="Dalin E."/>
            <person name="Tice H."/>
            <person name="Bruce D."/>
            <person name="Goodwin L."/>
            <person name="Pitluck S."/>
            <person name="Chertkov O."/>
            <person name="Brettin T."/>
            <person name="Detter J.C."/>
            <person name="Han C."/>
            <person name="Larimer F."/>
            <person name="Land M."/>
            <person name="Hauser L."/>
            <person name="Kyrpides N."/>
            <person name="Mikhailova N."/>
            <person name="Brumm P."/>
            <person name="Mead D.A."/>
            <person name="Richardson P."/>
        </authorList>
    </citation>
    <scope>NUCLEOTIDE SEQUENCE [LARGE SCALE GENOMIC DNA]</scope>
    <source>
        <strain>WCH70</strain>
    </source>
</reference>
<comment type="function">
    <text evidence="1">Produces ATP from ADP in the presence of a proton gradient across the membrane. The alpha chain is a regulatory subunit.</text>
</comment>
<comment type="catalytic activity">
    <reaction evidence="1">
        <text>ATP + H2O + 4 H(+)(in) = ADP + phosphate + 5 H(+)(out)</text>
        <dbReference type="Rhea" id="RHEA:57720"/>
        <dbReference type="ChEBI" id="CHEBI:15377"/>
        <dbReference type="ChEBI" id="CHEBI:15378"/>
        <dbReference type="ChEBI" id="CHEBI:30616"/>
        <dbReference type="ChEBI" id="CHEBI:43474"/>
        <dbReference type="ChEBI" id="CHEBI:456216"/>
        <dbReference type="EC" id="7.1.2.2"/>
    </reaction>
</comment>
<comment type="subunit">
    <text evidence="1">F-type ATPases have 2 components, CF(1) - the catalytic core - and CF(0) - the membrane proton channel. CF(1) has five subunits: alpha(3), beta(3), gamma(1), delta(1), epsilon(1). CF(0) has three main subunits: a(1), b(2) and c(9-12). The alpha and beta chains form an alternating ring which encloses part of the gamma chain. CF(1) is attached to CF(0) by a central stalk formed by the gamma and epsilon chains, while a peripheral stalk is formed by the delta and b chains.</text>
</comment>
<comment type="subcellular location">
    <subcellularLocation>
        <location evidence="1">Cell membrane</location>
        <topology evidence="1">Peripheral membrane protein</topology>
    </subcellularLocation>
</comment>
<comment type="similarity">
    <text evidence="1">Belongs to the ATPase alpha/beta chains family.</text>
</comment>
<sequence>MSIRAEEISALIKQQIENYESEIQVSDVGTVIQIGDGIARAHGLDNVMSGELVEFSNGVMGMALNLEENNVGIVILGPYTGIKEGDEVRRTGRIMEVPVGEALIGRVVNPLGQPVDGLGPIETTETRPIESPAPGVMDRKSVHEPLQTGIKAIDALVPIGRGQRELIIGDRQTGKTSIAIDTIINQKDQNMICIYVAIGQKESTVRTVVETLRKHGALDYTIVVTASASQPAPLLFLAPYAGVTMGEYFMYKGQHVLVVYDDLSKQAAAYRELSLLLRRPPGREAYPGDIFYLHSRLLERAAKLSDAKGGGSLTALPFVETQAGDISAYIPTNVISITDGQIFLQSDLFFSGVRPAINAGLSVSRVGGAAQIKAMKKVSGTLRLDLAAYRELEAFAQFGSDLDKATQAKLARGARTVEVLKQDLHAPIPVEKQVAIIYALTHGFLDDIPVEDIRRFEKEFFLWLDQNGQHLLEHIRTTKELPNEEDFNKAIEAFKKTFVVSQ</sequence>
<dbReference type="EC" id="7.1.2.2" evidence="1"/>
<dbReference type="EMBL" id="CP001638">
    <property type="protein sequence ID" value="ACS25945.1"/>
    <property type="molecule type" value="Genomic_DNA"/>
</dbReference>
<dbReference type="SMR" id="C5D992"/>
<dbReference type="STRING" id="471223.GWCH70_3305"/>
<dbReference type="KEGG" id="gwc:GWCH70_3305"/>
<dbReference type="eggNOG" id="COG0056">
    <property type="taxonomic scope" value="Bacteria"/>
</dbReference>
<dbReference type="HOGENOM" id="CLU_010091_2_1_9"/>
<dbReference type="OrthoDB" id="9803053at2"/>
<dbReference type="GO" id="GO:0005886">
    <property type="term" value="C:plasma membrane"/>
    <property type="evidence" value="ECO:0007669"/>
    <property type="project" value="UniProtKB-SubCell"/>
</dbReference>
<dbReference type="GO" id="GO:0045259">
    <property type="term" value="C:proton-transporting ATP synthase complex"/>
    <property type="evidence" value="ECO:0007669"/>
    <property type="project" value="UniProtKB-KW"/>
</dbReference>
<dbReference type="GO" id="GO:0043531">
    <property type="term" value="F:ADP binding"/>
    <property type="evidence" value="ECO:0007669"/>
    <property type="project" value="TreeGrafter"/>
</dbReference>
<dbReference type="GO" id="GO:0005524">
    <property type="term" value="F:ATP binding"/>
    <property type="evidence" value="ECO:0007669"/>
    <property type="project" value="UniProtKB-UniRule"/>
</dbReference>
<dbReference type="GO" id="GO:0046933">
    <property type="term" value="F:proton-transporting ATP synthase activity, rotational mechanism"/>
    <property type="evidence" value="ECO:0007669"/>
    <property type="project" value="UniProtKB-UniRule"/>
</dbReference>
<dbReference type="CDD" id="cd18113">
    <property type="entry name" value="ATP-synt_F1_alpha_C"/>
    <property type="match status" value="1"/>
</dbReference>
<dbReference type="CDD" id="cd18116">
    <property type="entry name" value="ATP-synt_F1_alpha_N"/>
    <property type="match status" value="1"/>
</dbReference>
<dbReference type="CDD" id="cd01132">
    <property type="entry name" value="F1-ATPase_alpha_CD"/>
    <property type="match status" value="1"/>
</dbReference>
<dbReference type="FunFam" id="1.20.150.20:FF:000001">
    <property type="entry name" value="ATP synthase subunit alpha"/>
    <property type="match status" value="1"/>
</dbReference>
<dbReference type="FunFam" id="2.40.30.20:FF:000001">
    <property type="entry name" value="ATP synthase subunit alpha"/>
    <property type="match status" value="1"/>
</dbReference>
<dbReference type="FunFam" id="3.40.50.300:FF:000002">
    <property type="entry name" value="ATP synthase subunit alpha"/>
    <property type="match status" value="1"/>
</dbReference>
<dbReference type="Gene3D" id="2.40.30.20">
    <property type="match status" value="1"/>
</dbReference>
<dbReference type="Gene3D" id="1.20.150.20">
    <property type="entry name" value="ATP synthase alpha/beta chain, C-terminal domain"/>
    <property type="match status" value="1"/>
</dbReference>
<dbReference type="Gene3D" id="3.40.50.300">
    <property type="entry name" value="P-loop containing nucleotide triphosphate hydrolases"/>
    <property type="match status" value="1"/>
</dbReference>
<dbReference type="HAMAP" id="MF_01346">
    <property type="entry name" value="ATP_synth_alpha_bact"/>
    <property type="match status" value="1"/>
</dbReference>
<dbReference type="InterPro" id="IPR023366">
    <property type="entry name" value="ATP_synth_asu-like_sf"/>
</dbReference>
<dbReference type="InterPro" id="IPR000793">
    <property type="entry name" value="ATP_synth_asu_C"/>
</dbReference>
<dbReference type="InterPro" id="IPR038376">
    <property type="entry name" value="ATP_synth_asu_C_sf"/>
</dbReference>
<dbReference type="InterPro" id="IPR033732">
    <property type="entry name" value="ATP_synth_F1_a_nt-bd_dom"/>
</dbReference>
<dbReference type="InterPro" id="IPR005294">
    <property type="entry name" value="ATP_synth_F1_asu"/>
</dbReference>
<dbReference type="InterPro" id="IPR020003">
    <property type="entry name" value="ATPase_a/bsu_AS"/>
</dbReference>
<dbReference type="InterPro" id="IPR004100">
    <property type="entry name" value="ATPase_F1/V1/A1_a/bsu_N"/>
</dbReference>
<dbReference type="InterPro" id="IPR036121">
    <property type="entry name" value="ATPase_F1/V1/A1_a/bsu_N_sf"/>
</dbReference>
<dbReference type="InterPro" id="IPR000194">
    <property type="entry name" value="ATPase_F1/V1/A1_a/bsu_nucl-bd"/>
</dbReference>
<dbReference type="InterPro" id="IPR027417">
    <property type="entry name" value="P-loop_NTPase"/>
</dbReference>
<dbReference type="NCBIfam" id="TIGR00962">
    <property type="entry name" value="atpA"/>
    <property type="match status" value="1"/>
</dbReference>
<dbReference type="NCBIfam" id="NF009884">
    <property type="entry name" value="PRK13343.1"/>
    <property type="match status" value="1"/>
</dbReference>
<dbReference type="PANTHER" id="PTHR48082">
    <property type="entry name" value="ATP SYNTHASE SUBUNIT ALPHA, MITOCHONDRIAL"/>
    <property type="match status" value="1"/>
</dbReference>
<dbReference type="PANTHER" id="PTHR48082:SF2">
    <property type="entry name" value="ATP SYNTHASE SUBUNIT ALPHA, MITOCHONDRIAL"/>
    <property type="match status" value="1"/>
</dbReference>
<dbReference type="Pfam" id="PF00006">
    <property type="entry name" value="ATP-synt_ab"/>
    <property type="match status" value="1"/>
</dbReference>
<dbReference type="Pfam" id="PF00306">
    <property type="entry name" value="ATP-synt_ab_C"/>
    <property type="match status" value="1"/>
</dbReference>
<dbReference type="Pfam" id="PF02874">
    <property type="entry name" value="ATP-synt_ab_N"/>
    <property type="match status" value="1"/>
</dbReference>
<dbReference type="PIRSF" id="PIRSF039088">
    <property type="entry name" value="F_ATPase_subunit_alpha"/>
    <property type="match status" value="1"/>
</dbReference>
<dbReference type="SUPFAM" id="SSF47917">
    <property type="entry name" value="C-terminal domain of alpha and beta subunits of F1 ATP synthase"/>
    <property type="match status" value="1"/>
</dbReference>
<dbReference type="SUPFAM" id="SSF50615">
    <property type="entry name" value="N-terminal domain of alpha and beta subunits of F1 ATP synthase"/>
    <property type="match status" value="1"/>
</dbReference>
<dbReference type="SUPFAM" id="SSF52540">
    <property type="entry name" value="P-loop containing nucleoside triphosphate hydrolases"/>
    <property type="match status" value="1"/>
</dbReference>
<dbReference type="PROSITE" id="PS00152">
    <property type="entry name" value="ATPASE_ALPHA_BETA"/>
    <property type="match status" value="1"/>
</dbReference>